<keyword id="KW-0030">Aminoacyl-tRNA synthetase</keyword>
<keyword id="KW-0067">ATP-binding</keyword>
<keyword id="KW-0963">Cytoplasm</keyword>
<keyword id="KW-0436">Ligase</keyword>
<keyword id="KW-0547">Nucleotide-binding</keyword>
<keyword id="KW-0648">Protein biosynthesis</keyword>
<keyword id="KW-1185">Reference proteome</keyword>
<feature type="chain" id="PRO_1000006719" description="Aspartate--tRNA(Asp/Asn) ligase">
    <location>
        <begin position="1"/>
        <end position="597"/>
    </location>
</feature>
<feature type="region of interest" description="Aspartate" evidence="1">
    <location>
        <begin position="200"/>
        <end position="203"/>
    </location>
</feature>
<feature type="binding site" evidence="1">
    <location>
        <position position="176"/>
    </location>
    <ligand>
        <name>L-aspartate</name>
        <dbReference type="ChEBI" id="CHEBI:29991"/>
    </ligand>
</feature>
<feature type="binding site" evidence="1">
    <location>
        <begin position="222"/>
        <end position="224"/>
    </location>
    <ligand>
        <name>ATP</name>
        <dbReference type="ChEBI" id="CHEBI:30616"/>
    </ligand>
</feature>
<feature type="binding site" evidence="1">
    <location>
        <position position="222"/>
    </location>
    <ligand>
        <name>L-aspartate</name>
        <dbReference type="ChEBI" id="CHEBI:29991"/>
    </ligand>
</feature>
<feature type="binding site" evidence="1">
    <location>
        <position position="451"/>
    </location>
    <ligand>
        <name>L-aspartate</name>
        <dbReference type="ChEBI" id="CHEBI:29991"/>
    </ligand>
</feature>
<feature type="binding site" evidence="1">
    <location>
        <position position="489"/>
    </location>
    <ligand>
        <name>ATP</name>
        <dbReference type="ChEBI" id="CHEBI:30616"/>
    </ligand>
</feature>
<feature type="binding site" evidence="1">
    <location>
        <position position="496"/>
    </location>
    <ligand>
        <name>L-aspartate</name>
        <dbReference type="ChEBI" id="CHEBI:29991"/>
    </ligand>
</feature>
<feature type="binding site" evidence="1">
    <location>
        <begin position="541"/>
        <end position="544"/>
    </location>
    <ligand>
        <name>ATP</name>
        <dbReference type="ChEBI" id="CHEBI:30616"/>
    </ligand>
</feature>
<feature type="site" description="Important for tRNA non-discrimination" evidence="1">
    <location>
        <position position="33"/>
    </location>
</feature>
<reference key="1">
    <citation type="journal article" date="2007" name="Proc. Natl. Acad. Sci. U.S.A.">
        <title>The Orientia tsutsugamushi genome reveals massive proliferation of conjugative type IV secretion system and host-cell interaction genes.</title>
        <authorList>
            <person name="Cho N.-H."/>
            <person name="Kim H.-R."/>
            <person name="Lee J.-H."/>
            <person name="Kim S.-Y."/>
            <person name="Kim J."/>
            <person name="Cha S."/>
            <person name="Kim S.-Y."/>
            <person name="Darby A.C."/>
            <person name="Fuxelius H.-H."/>
            <person name="Yin J."/>
            <person name="Kim J.H."/>
            <person name="Kim J."/>
            <person name="Lee S.J."/>
            <person name="Koh Y.-S."/>
            <person name="Jang W.-J."/>
            <person name="Park K.-H."/>
            <person name="Andersson S.G.E."/>
            <person name="Choi M.-S."/>
            <person name="Kim I.-S."/>
        </authorList>
    </citation>
    <scope>NUCLEOTIDE SEQUENCE [LARGE SCALE GENOMIC DNA]</scope>
    <source>
        <strain>Boryong</strain>
    </source>
</reference>
<protein>
    <recommendedName>
        <fullName evidence="1">Aspartate--tRNA(Asp/Asn) ligase</fullName>
        <ecNumber evidence="1">6.1.1.23</ecNumber>
    </recommendedName>
    <alternativeName>
        <fullName evidence="1">Aspartyl-tRNA synthetase</fullName>
        <shortName evidence="1">AspRS</shortName>
    </alternativeName>
    <alternativeName>
        <fullName evidence="1">Non-discriminating aspartyl-tRNA synthetase</fullName>
        <shortName evidence="1">ND-AspRS</shortName>
    </alternativeName>
</protein>
<sequence length="597" mass="67432">MHKYRTHTCGELSLAHVGLQVKLSGWLYRRRDHGGLLFIDLRDHYGIIQLVFNDDCSAVQAEISKIKFETVITVEGAVVARSNETINKNISTGDVEVVVSSYVVESFAEELPLQINGEYEAPEETRLKYRFLDLRGARLHQNIVLRSKVIQELRNQMLSNGFIEFQTPILTASSPEGARDFLVPSRLHPGKFYALPQAPQQFKQLIMMSGFDKYFQIAPCFRDEDARADRSPGEFYQLDIEMAFVTQEDVFGLVEPVLYNTFKKFSNYSITNIPFPRITYDESMLRYGSDKPDLRNPIQISDVTDIFQCSEFTTLKDSINCGAVVRAIPAPMSANKPRSFFDKMIEYAKHLGASGLAYIQFTNDGVKGSIAKFFDEALLARIKKLVKCQDGDAIFFICDKENDATKVAAKIRAKVGEELNIIKTDCYKFCWVIDFPFYQLDSEINKITFSHNPFSMPQGGIEAFNKAKTVEDLLSIKAFQYDIVCNGVELSSGAIRNHKPDLMYKAFAIVGYSKDEVDKQFGAMIRAFCYGAPPHGGIAPGIDRILMLLTNSVNIREVIAFPMNQQAEDLLMGCPAAVTDKQLHELQLKLISKERIK</sequence>
<gene>
    <name evidence="1" type="primary">aspS</name>
    <name type="ordered locus">OTBS_0206</name>
</gene>
<name>SYDND_ORITB</name>
<dbReference type="EC" id="6.1.1.23" evidence="1"/>
<dbReference type="EMBL" id="AM494475">
    <property type="protein sequence ID" value="CAM79272.1"/>
    <property type="molecule type" value="Genomic_DNA"/>
</dbReference>
<dbReference type="RefSeq" id="WP_011944330.1">
    <property type="nucleotide sequence ID" value="NC_009488.1"/>
</dbReference>
<dbReference type="SMR" id="A5CC91"/>
<dbReference type="KEGG" id="ots:OTBS_0206"/>
<dbReference type="eggNOG" id="COG0173">
    <property type="taxonomic scope" value="Bacteria"/>
</dbReference>
<dbReference type="HOGENOM" id="CLU_014330_3_2_5"/>
<dbReference type="Proteomes" id="UP000001565">
    <property type="component" value="Chromosome"/>
</dbReference>
<dbReference type="GO" id="GO:0005737">
    <property type="term" value="C:cytoplasm"/>
    <property type="evidence" value="ECO:0007669"/>
    <property type="project" value="UniProtKB-SubCell"/>
</dbReference>
<dbReference type="GO" id="GO:0004815">
    <property type="term" value="F:aspartate-tRNA ligase activity"/>
    <property type="evidence" value="ECO:0007669"/>
    <property type="project" value="UniProtKB-UniRule"/>
</dbReference>
<dbReference type="GO" id="GO:0050560">
    <property type="term" value="F:aspartate-tRNA(Asn) ligase activity"/>
    <property type="evidence" value="ECO:0007669"/>
    <property type="project" value="UniProtKB-EC"/>
</dbReference>
<dbReference type="GO" id="GO:0005524">
    <property type="term" value="F:ATP binding"/>
    <property type="evidence" value="ECO:0007669"/>
    <property type="project" value="UniProtKB-UniRule"/>
</dbReference>
<dbReference type="GO" id="GO:0003676">
    <property type="term" value="F:nucleic acid binding"/>
    <property type="evidence" value="ECO:0007669"/>
    <property type="project" value="InterPro"/>
</dbReference>
<dbReference type="GO" id="GO:0006422">
    <property type="term" value="P:aspartyl-tRNA aminoacylation"/>
    <property type="evidence" value="ECO:0007669"/>
    <property type="project" value="UniProtKB-UniRule"/>
</dbReference>
<dbReference type="CDD" id="cd00777">
    <property type="entry name" value="AspRS_core"/>
    <property type="match status" value="1"/>
</dbReference>
<dbReference type="CDD" id="cd04317">
    <property type="entry name" value="EcAspRS_like_N"/>
    <property type="match status" value="1"/>
</dbReference>
<dbReference type="Gene3D" id="3.30.930.10">
    <property type="entry name" value="Bira Bifunctional Protein, Domain 2"/>
    <property type="match status" value="1"/>
</dbReference>
<dbReference type="Gene3D" id="3.30.1360.30">
    <property type="entry name" value="GAD-like domain"/>
    <property type="match status" value="1"/>
</dbReference>
<dbReference type="Gene3D" id="2.40.50.140">
    <property type="entry name" value="Nucleic acid-binding proteins"/>
    <property type="match status" value="1"/>
</dbReference>
<dbReference type="HAMAP" id="MF_00044">
    <property type="entry name" value="Asp_tRNA_synth_type1"/>
    <property type="match status" value="1"/>
</dbReference>
<dbReference type="InterPro" id="IPR004364">
    <property type="entry name" value="Aa-tRNA-synt_II"/>
</dbReference>
<dbReference type="InterPro" id="IPR006195">
    <property type="entry name" value="aa-tRNA-synth_II"/>
</dbReference>
<dbReference type="InterPro" id="IPR045864">
    <property type="entry name" value="aa-tRNA-synth_II/BPL/LPL"/>
</dbReference>
<dbReference type="InterPro" id="IPR004524">
    <property type="entry name" value="Asp-tRNA-ligase_1"/>
</dbReference>
<dbReference type="InterPro" id="IPR047089">
    <property type="entry name" value="Asp-tRNA-ligase_1_N"/>
</dbReference>
<dbReference type="InterPro" id="IPR002312">
    <property type="entry name" value="Asp/Asn-tRNA-synth_IIb"/>
</dbReference>
<dbReference type="InterPro" id="IPR047090">
    <property type="entry name" value="AspRS_core"/>
</dbReference>
<dbReference type="InterPro" id="IPR004115">
    <property type="entry name" value="GAD-like_sf"/>
</dbReference>
<dbReference type="InterPro" id="IPR029351">
    <property type="entry name" value="GAD_dom"/>
</dbReference>
<dbReference type="InterPro" id="IPR012340">
    <property type="entry name" value="NA-bd_OB-fold"/>
</dbReference>
<dbReference type="InterPro" id="IPR004365">
    <property type="entry name" value="NA-bd_OB_tRNA"/>
</dbReference>
<dbReference type="NCBIfam" id="TIGR00459">
    <property type="entry name" value="aspS_bact"/>
    <property type="match status" value="1"/>
</dbReference>
<dbReference type="NCBIfam" id="NF001750">
    <property type="entry name" value="PRK00476.1"/>
    <property type="match status" value="1"/>
</dbReference>
<dbReference type="PANTHER" id="PTHR22594:SF5">
    <property type="entry name" value="ASPARTATE--TRNA LIGASE, MITOCHONDRIAL"/>
    <property type="match status" value="1"/>
</dbReference>
<dbReference type="PANTHER" id="PTHR22594">
    <property type="entry name" value="ASPARTYL/LYSYL-TRNA SYNTHETASE"/>
    <property type="match status" value="1"/>
</dbReference>
<dbReference type="Pfam" id="PF02938">
    <property type="entry name" value="GAD"/>
    <property type="match status" value="1"/>
</dbReference>
<dbReference type="Pfam" id="PF00152">
    <property type="entry name" value="tRNA-synt_2"/>
    <property type="match status" value="1"/>
</dbReference>
<dbReference type="Pfam" id="PF01336">
    <property type="entry name" value="tRNA_anti-codon"/>
    <property type="match status" value="1"/>
</dbReference>
<dbReference type="PRINTS" id="PR01042">
    <property type="entry name" value="TRNASYNTHASP"/>
</dbReference>
<dbReference type="SUPFAM" id="SSF55681">
    <property type="entry name" value="Class II aaRS and biotin synthetases"/>
    <property type="match status" value="1"/>
</dbReference>
<dbReference type="SUPFAM" id="SSF55261">
    <property type="entry name" value="GAD domain-like"/>
    <property type="match status" value="1"/>
</dbReference>
<dbReference type="SUPFAM" id="SSF50249">
    <property type="entry name" value="Nucleic acid-binding proteins"/>
    <property type="match status" value="1"/>
</dbReference>
<dbReference type="PROSITE" id="PS50862">
    <property type="entry name" value="AA_TRNA_LIGASE_II"/>
    <property type="match status" value="1"/>
</dbReference>
<accession>A5CC91</accession>
<comment type="function">
    <text evidence="1">Aspartyl-tRNA synthetase with relaxed tRNA specificity since it is able to aspartylate not only its cognate tRNA(Asp) but also tRNA(Asn). Reaction proceeds in two steps: L-aspartate is first activated by ATP to form Asp-AMP and then transferred to the acceptor end of tRNA(Asp/Asn).</text>
</comment>
<comment type="catalytic activity">
    <reaction evidence="1">
        <text>tRNA(Asx) + L-aspartate + ATP = L-aspartyl-tRNA(Asx) + AMP + diphosphate</text>
        <dbReference type="Rhea" id="RHEA:18349"/>
        <dbReference type="Rhea" id="RHEA-COMP:9710"/>
        <dbReference type="Rhea" id="RHEA-COMP:9711"/>
        <dbReference type="ChEBI" id="CHEBI:29991"/>
        <dbReference type="ChEBI" id="CHEBI:30616"/>
        <dbReference type="ChEBI" id="CHEBI:33019"/>
        <dbReference type="ChEBI" id="CHEBI:78442"/>
        <dbReference type="ChEBI" id="CHEBI:78516"/>
        <dbReference type="ChEBI" id="CHEBI:456215"/>
        <dbReference type="EC" id="6.1.1.23"/>
    </reaction>
</comment>
<comment type="subunit">
    <text evidence="1">Homodimer.</text>
</comment>
<comment type="subcellular location">
    <subcellularLocation>
        <location evidence="1">Cytoplasm</location>
    </subcellularLocation>
</comment>
<comment type="similarity">
    <text evidence="1">Belongs to the class-II aminoacyl-tRNA synthetase family. Type 1 subfamily.</text>
</comment>
<proteinExistence type="inferred from homology"/>
<organism>
    <name type="scientific">Orientia tsutsugamushi (strain Boryong)</name>
    <name type="common">Rickettsia tsutsugamushi</name>
    <dbReference type="NCBI Taxonomy" id="357244"/>
    <lineage>
        <taxon>Bacteria</taxon>
        <taxon>Pseudomonadati</taxon>
        <taxon>Pseudomonadota</taxon>
        <taxon>Alphaproteobacteria</taxon>
        <taxon>Rickettsiales</taxon>
        <taxon>Rickettsiaceae</taxon>
        <taxon>Rickettsieae</taxon>
        <taxon>Orientia</taxon>
    </lineage>
</organism>
<evidence type="ECO:0000255" key="1">
    <source>
        <dbReference type="HAMAP-Rule" id="MF_00044"/>
    </source>
</evidence>